<evidence type="ECO:0000255" key="1">
    <source>
        <dbReference type="HAMAP-Rule" id="MF_02001"/>
    </source>
</evidence>
<evidence type="ECO:0000255" key="2">
    <source>
        <dbReference type="PROSITE-ProRule" id="PRU00285"/>
    </source>
</evidence>
<keyword id="KW-0143">Chaperone</keyword>
<keyword id="KW-0963">Cytoplasm</keyword>
<keyword id="KW-0346">Stress response</keyword>
<accession>B7NF03</accession>
<organism>
    <name type="scientific">Escherichia coli O17:K52:H18 (strain UMN026 / ExPEC)</name>
    <dbReference type="NCBI Taxonomy" id="585056"/>
    <lineage>
        <taxon>Bacteria</taxon>
        <taxon>Pseudomonadati</taxon>
        <taxon>Pseudomonadota</taxon>
        <taxon>Gammaproteobacteria</taxon>
        <taxon>Enterobacterales</taxon>
        <taxon>Enterobacteriaceae</taxon>
        <taxon>Escherichia</taxon>
    </lineage>
</organism>
<gene>
    <name evidence="1" type="primary">ibpB</name>
    <name type="ordered locus">ECUMN_4217</name>
</gene>
<comment type="function">
    <text evidence="1">Associates with aggregated proteins, together with IbpA, to stabilize and protect them from irreversible denaturation and extensive proteolysis during heat shock and oxidative stress. Aggregated proteins bound to the IbpAB complex are more efficiently refolded and reactivated by the ATP-dependent chaperone systems ClpB and DnaK/DnaJ/GrpE. Its activity is ATP-independent.</text>
</comment>
<comment type="subunit">
    <text evidence="1">Homodimer. Forms homomultimers of about 100-150 subunits at optimal growth temperatures. Conformation changes to oligomers at high temperatures or high ionic concentrations. The decrease in size of the multimers is accompanied by an increase in chaperone activity.</text>
</comment>
<comment type="subcellular location">
    <subcellularLocation>
        <location evidence="1">Cytoplasm</location>
    </subcellularLocation>
</comment>
<comment type="domain">
    <text evidence="1">The N- and C-terminal flexible termini are involved in oligomerization and in the binding of non-native substrate proteins, and are essential for chaperone activity.</text>
</comment>
<comment type="similarity">
    <text evidence="1 2">Belongs to the small heat shock protein (HSP20) family.</text>
</comment>
<proteinExistence type="inferred from homology"/>
<dbReference type="EMBL" id="CU928163">
    <property type="protein sequence ID" value="CAR15357.1"/>
    <property type="molecule type" value="Genomic_DNA"/>
</dbReference>
<dbReference type="RefSeq" id="WP_001243431.1">
    <property type="nucleotide sequence ID" value="NC_011751.1"/>
</dbReference>
<dbReference type="RefSeq" id="YP_002414851.1">
    <property type="nucleotide sequence ID" value="NC_011751.1"/>
</dbReference>
<dbReference type="SMR" id="B7NF03"/>
<dbReference type="STRING" id="585056.ECUMN_4217"/>
<dbReference type="GeneID" id="93778427"/>
<dbReference type="KEGG" id="eum:ECUMN_4217"/>
<dbReference type="PATRIC" id="fig|585056.7.peg.4389"/>
<dbReference type="HOGENOM" id="CLU_046737_4_2_6"/>
<dbReference type="Proteomes" id="UP000007097">
    <property type="component" value="Chromosome"/>
</dbReference>
<dbReference type="GO" id="GO:0005737">
    <property type="term" value="C:cytoplasm"/>
    <property type="evidence" value="ECO:0007669"/>
    <property type="project" value="UniProtKB-SubCell"/>
</dbReference>
<dbReference type="GO" id="GO:0050821">
    <property type="term" value="P:protein stabilization"/>
    <property type="evidence" value="ECO:0007669"/>
    <property type="project" value="UniProtKB-UniRule"/>
</dbReference>
<dbReference type="CDD" id="cd06470">
    <property type="entry name" value="ACD_IbpA-B_like"/>
    <property type="match status" value="1"/>
</dbReference>
<dbReference type="FunFam" id="2.60.40.790:FF:000005">
    <property type="entry name" value="Small heat shock protein IbpB"/>
    <property type="match status" value="1"/>
</dbReference>
<dbReference type="Gene3D" id="2.60.40.790">
    <property type="match status" value="1"/>
</dbReference>
<dbReference type="HAMAP" id="MF_02001">
    <property type="entry name" value="HSP20_IbpB"/>
    <property type="match status" value="1"/>
</dbReference>
<dbReference type="InterPro" id="IPR002068">
    <property type="entry name" value="A-crystallin/Hsp20_dom"/>
</dbReference>
<dbReference type="InterPro" id="IPR037913">
    <property type="entry name" value="ACD_IbpA/B"/>
</dbReference>
<dbReference type="InterPro" id="IPR008978">
    <property type="entry name" value="HSP20-like_chaperone"/>
</dbReference>
<dbReference type="InterPro" id="IPR022848">
    <property type="entry name" value="HSP20_IbpB"/>
</dbReference>
<dbReference type="NCBIfam" id="NF008618">
    <property type="entry name" value="PRK11597.1"/>
    <property type="match status" value="1"/>
</dbReference>
<dbReference type="PANTHER" id="PTHR47062">
    <property type="match status" value="1"/>
</dbReference>
<dbReference type="PANTHER" id="PTHR47062:SF2">
    <property type="entry name" value="SMALL HEAT SHOCK PROTEIN IBPB"/>
    <property type="match status" value="1"/>
</dbReference>
<dbReference type="Pfam" id="PF00011">
    <property type="entry name" value="HSP20"/>
    <property type="match status" value="1"/>
</dbReference>
<dbReference type="SUPFAM" id="SSF49764">
    <property type="entry name" value="HSP20-like chaperones"/>
    <property type="match status" value="1"/>
</dbReference>
<dbReference type="PROSITE" id="PS01031">
    <property type="entry name" value="SHSP"/>
    <property type="match status" value="1"/>
</dbReference>
<sequence>MRNFDLSPLMRQWIGFDKLANALQNAGESQSFPPYNIEKSDDNHYRITLALAGFRQEDLEIQLEGTRLSVKGTPEQPKEEKKWLHQGLMNQPFSLSFTLAENMEVSGATFVNGLLHIDLIRNEPEPIAAQRIAISERPALNS</sequence>
<reference key="1">
    <citation type="journal article" date="2009" name="PLoS Genet.">
        <title>Organised genome dynamics in the Escherichia coli species results in highly diverse adaptive paths.</title>
        <authorList>
            <person name="Touchon M."/>
            <person name="Hoede C."/>
            <person name="Tenaillon O."/>
            <person name="Barbe V."/>
            <person name="Baeriswyl S."/>
            <person name="Bidet P."/>
            <person name="Bingen E."/>
            <person name="Bonacorsi S."/>
            <person name="Bouchier C."/>
            <person name="Bouvet O."/>
            <person name="Calteau A."/>
            <person name="Chiapello H."/>
            <person name="Clermont O."/>
            <person name="Cruveiller S."/>
            <person name="Danchin A."/>
            <person name="Diard M."/>
            <person name="Dossat C."/>
            <person name="Karoui M.E."/>
            <person name="Frapy E."/>
            <person name="Garry L."/>
            <person name="Ghigo J.M."/>
            <person name="Gilles A.M."/>
            <person name="Johnson J."/>
            <person name="Le Bouguenec C."/>
            <person name="Lescat M."/>
            <person name="Mangenot S."/>
            <person name="Martinez-Jehanne V."/>
            <person name="Matic I."/>
            <person name="Nassif X."/>
            <person name="Oztas S."/>
            <person name="Petit M.A."/>
            <person name="Pichon C."/>
            <person name="Rouy Z."/>
            <person name="Ruf C.S."/>
            <person name="Schneider D."/>
            <person name="Tourret J."/>
            <person name="Vacherie B."/>
            <person name="Vallenet D."/>
            <person name="Medigue C."/>
            <person name="Rocha E.P.C."/>
            <person name="Denamur E."/>
        </authorList>
    </citation>
    <scope>NUCLEOTIDE SEQUENCE [LARGE SCALE GENOMIC DNA]</scope>
    <source>
        <strain>UMN026 / ExPEC</strain>
    </source>
</reference>
<protein>
    <recommendedName>
        <fullName evidence="1">Small heat shock protein IbpB</fullName>
    </recommendedName>
    <alternativeName>
        <fullName evidence="1">16 kDa heat shock protein B</fullName>
    </alternativeName>
</protein>
<name>IBPB_ECOLU</name>
<feature type="chain" id="PRO_1000189103" description="Small heat shock protein IbpB">
    <location>
        <begin position="1"/>
        <end position="142"/>
    </location>
</feature>
<feature type="domain" description="sHSP" evidence="2">
    <location>
        <begin position="26"/>
        <end position="137"/>
    </location>
</feature>